<gene>
    <name evidence="1" type="primary">dxs</name>
    <name type="ordered locus">MAE_62650</name>
</gene>
<protein>
    <recommendedName>
        <fullName evidence="1">1-deoxy-D-xylulose-5-phosphate synthase</fullName>
        <ecNumber evidence="1">2.2.1.7</ecNumber>
    </recommendedName>
    <alternativeName>
        <fullName evidence="1">1-deoxyxylulose-5-phosphate synthase</fullName>
        <shortName evidence="1">DXP synthase</shortName>
        <shortName evidence="1">DXPS</shortName>
    </alternativeName>
</protein>
<name>DXS_MICAN</name>
<proteinExistence type="inferred from homology"/>
<dbReference type="EC" id="2.2.1.7" evidence="1"/>
<dbReference type="EMBL" id="AP009552">
    <property type="protein sequence ID" value="BAG06087.1"/>
    <property type="molecule type" value="Genomic_DNA"/>
</dbReference>
<dbReference type="RefSeq" id="WP_012268365.1">
    <property type="nucleotide sequence ID" value="NC_010296.1"/>
</dbReference>
<dbReference type="SMR" id="B0JL88"/>
<dbReference type="STRING" id="449447.MAE_62650"/>
<dbReference type="PaxDb" id="449447-MAE_62650"/>
<dbReference type="EnsemblBacteria" id="BAG06087">
    <property type="protein sequence ID" value="BAG06087"/>
    <property type="gene ID" value="MAE_62650"/>
</dbReference>
<dbReference type="KEGG" id="mar:MAE_62650"/>
<dbReference type="PATRIC" id="fig|449447.4.peg.5740"/>
<dbReference type="eggNOG" id="COG1154">
    <property type="taxonomic scope" value="Bacteria"/>
</dbReference>
<dbReference type="HOGENOM" id="CLU_009227_1_4_3"/>
<dbReference type="BioCyc" id="MAER449447:MAE_RS27385-MONOMER"/>
<dbReference type="UniPathway" id="UPA00064">
    <property type="reaction ID" value="UER00091"/>
</dbReference>
<dbReference type="Proteomes" id="UP000001510">
    <property type="component" value="Chromosome"/>
</dbReference>
<dbReference type="GO" id="GO:0005829">
    <property type="term" value="C:cytosol"/>
    <property type="evidence" value="ECO:0007669"/>
    <property type="project" value="TreeGrafter"/>
</dbReference>
<dbReference type="GO" id="GO:0008661">
    <property type="term" value="F:1-deoxy-D-xylulose-5-phosphate synthase activity"/>
    <property type="evidence" value="ECO:0007669"/>
    <property type="project" value="UniProtKB-UniRule"/>
</dbReference>
<dbReference type="GO" id="GO:0000287">
    <property type="term" value="F:magnesium ion binding"/>
    <property type="evidence" value="ECO:0007669"/>
    <property type="project" value="UniProtKB-UniRule"/>
</dbReference>
<dbReference type="GO" id="GO:0030976">
    <property type="term" value="F:thiamine pyrophosphate binding"/>
    <property type="evidence" value="ECO:0007669"/>
    <property type="project" value="UniProtKB-UniRule"/>
</dbReference>
<dbReference type="GO" id="GO:0052865">
    <property type="term" value="P:1-deoxy-D-xylulose 5-phosphate biosynthetic process"/>
    <property type="evidence" value="ECO:0007669"/>
    <property type="project" value="UniProtKB-UniPathway"/>
</dbReference>
<dbReference type="GO" id="GO:0019288">
    <property type="term" value="P:isopentenyl diphosphate biosynthetic process, methylerythritol 4-phosphate pathway"/>
    <property type="evidence" value="ECO:0007669"/>
    <property type="project" value="TreeGrafter"/>
</dbReference>
<dbReference type="GO" id="GO:0016114">
    <property type="term" value="P:terpenoid biosynthetic process"/>
    <property type="evidence" value="ECO:0007669"/>
    <property type="project" value="UniProtKB-UniRule"/>
</dbReference>
<dbReference type="GO" id="GO:0009228">
    <property type="term" value="P:thiamine biosynthetic process"/>
    <property type="evidence" value="ECO:0007669"/>
    <property type="project" value="UniProtKB-UniRule"/>
</dbReference>
<dbReference type="CDD" id="cd02007">
    <property type="entry name" value="TPP_DXS"/>
    <property type="match status" value="1"/>
</dbReference>
<dbReference type="CDD" id="cd07033">
    <property type="entry name" value="TPP_PYR_DXS_TK_like"/>
    <property type="match status" value="1"/>
</dbReference>
<dbReference type="FunFam" id="3.40.50.920:FF:000002">
    <property type="entry name" value="1-deoxy-D-xylulose-5-phosphate synthase"/>
    <property type="match status" value="1"/>
</dbReference>
<dbReference type="FunFam" id="3.40.50.970:FF:000005">
    <property type="entry name" value="1-deoxy-D-xylulose-5-phosphate synthase"/>
    <property type="match status" value="1"/>
</dbReference>
<dbReference type="Gene3D" id="3.40.50.920">
    <property type="match status" value="1"/>
</dbReference>
<dbReference type="Gene3D" id="3.40.50.970">
    <property type="match status" value="2"/>
</dbReference>
<dbReference type="HAMAP" id="MF_00315">
    <property type="entry name" value="DXP_synth"/>
    <property type="match status" value="1"/>
</dbReference>
<dbReference type="InterPro" id="IPR005477">
    <property type="entry name" value="Dxylulose-5-P_synthase"/>
</dbReference>
<dbReference type="InterPro" id="IPR029061">
    <property type="entry name" value="THDP-binding"/>
</dbReference>
<dbReference type="InterPro" id="IPR009014">
    <property type="entry name" value="Transketo_C/PFOR_II"/>
</dbReference>
<dbReference type="InterPro" id="IPR005475">
    <property type="entry name" value="Transketolase-like_Pyr-bd"/>
</dbReference>
<dbReference type="InterPro" id="IPR020826">
    <property type="entry name" value="Transketolase_BS"/>
</dbReference>
<dbReference type="InterPro" id="IPR033248">
    <property type="entry name" value="Transketolase_C"/>
</dbReference>
<dbReference type="InterPro" id="IPR049557">
    <property type="entry name" value="Transketolase_CS"/>
</dbReference>
<dbReference type="NCBIfam" id="TIGR00204">
    <property type="entry name" value="dxs"/>
    <property type="match status" value="1"/>
</dbReference>
<dbReference type="NCBIfam" id="NF003933">
    <property type="entry name" value="PRK05444.2-2"/>
    <property type="match status" value="1"/>
</dbReference>
<dbReference type="PANTHER" id="PTHR43322">
    <property type="entry name" value="1-D-DEOXYXYLULOSE 5-PHOSPHATE SYNTHASE-RELATED"/>
    <property type="match status" value="1"/>
</dbReference>
<dbReference type="PANTHER" id="PTHR43322:SF5">
    <property type="entry name" value="1-DEOXY-D-XYLULOSE-5-PHOSPHATE SYNTHASE, CHLOROPLASTIC"/>
    <property type="match status" value="1"/>
</dbReference>
<dbReference type="Pfam" id="PF13292">
    <property type="entry name" value="DXP_synthase_N"/>
    <property type="match status" value="1"/>
</dbReference>
<dbReference type="Pfam" id="PF02779">
    <property type="entry name" value="Transket_pyr"/>
    <property type="match status" value="1"/>
</dbReference>
<dbReference type="Pfam" id="PF02780">
    <property type="entry name" value="Transketolase_C"/>
    <property type="match status" value="1"/>
</dbReference>
<dbReference type="SMART" id="SM00861">
    <property type="entry name" value="Transket_pyr"/>
    <property type="match status" value="1"/>
</dbReference>
<dbReference type="SUPFAM" id="SSF52518">
    <property type="entry name" value="Thiamin diphosphate-binding fold (THDP-binding)"/>
    <property type="match status" value="2"/>
</dbReference>
<dbReference type="SUPFAM" id="SSF52922">
    <property type="entry name" value="TK C-terminal domain-like"/>
    <property type="match status" value="1"/>
</dbReference>
<dbReference type="PROSITE" id="PS00801">
    <property type="entry name" value="TRANSKETOLASE_1"/>
    <property type="match status" value="1"/>
</dbReference>
<dbReference type="PROSITE" id="PS00802">
    <property type="entry name" value="TRANSKETOLASE_2"/>
    <property type="match status" value="1"/>
</dbReference>
<organism>
    <name type="scientific">Microcystis aeruginosa (strain NIES-843 / IAM M-2473)</name>
    <dbReference type="NCBI Taxonomy" id="449447"/>
    <lineage>
        <taxon>Bacteria</taxon>
        <taxon>Bacillati</taxon>
        <taxon>Cyanobacteriota</taxon>
        <taxon>Cyanophyceae</taxon>
        <taxon>Oscillatoriophycideae</taxon>
        <taxon>Chroococcales</taxon>
        <taxon>Microcystaceae</taxon>
        <taxon>Microcystis</taxon>
    </lineage>
</organism>
<keyword id="KW-0414">Isoprene biosynthesis</keyword>
<keyword id="KW-0460">Magnesium</keyword>
<keyword id="KW-0479">Metal-binding</keyword>
<keyword id="KW-0784">Thiamine biosynthesis</keyword>
<keyword id="KW-0786">Thiamine pyrophosphate</keyword>
<keyword id="KW-0808">Transferase</keyword>
<accession>B0JL88</accession>
<evidence type="ECO:0000255" key="1">
    <source>
        <dbReference type="HAMAP-Rule" id="MF_00315"/>
    </source>
</evidence>
<feature type="chain" id="PRO_1000079093" description="1-deoxy-D-xylulose-5-phosphate synthase">
    <location>
        <begin position="1"/>
        <end position="636"/>
    </location>
</feature>
<feature type="binding site" evidence="1">
    <location>
        <position position="72"/>
    </location>
    <ligand>
        <name>thiamine diphosphate</name>
        <dbReference type="ChEBI" id="CHEBI:58937"/>
    </ligand>
</feature>
<feature type="binding site" evidence="1">
    <location>
        <begin position="113"/>
        <end position="115"/>
    </location>
    <ligand>
        <name>thiamine diphosphate</name>
        <dbReference type="ChEBI" id="CHEBI:58937"/>
    </ligand>
</feature>
<feature type="binding site" evidence="1">
    <location>
        <position position="144"/>
    </location>
    <ligand>
        <name>Mg(2+)</name>
        <dbReference type="ChEBI" id="CHEBI:18420"/>
    </ligand>
</feature>
<feature type="binding site" evidence="1">
    <location>
        <begin position="145"/>
        <end position="146"/>
    </location>
    <ligand>
        <name>thiamine diphosphate</name>
        <dbReference type="ChEBI" id="CHEBI:58937"/>
    </ligand>
</feature>
<feature type="binding site" evidence="1">
    <location>
        <position position="174"/>
    </location>
    <ligand>
        <name>Mg(2+)</name>
        <dbReference type="ChEBI" id="CHEBI:18420"/>
    </ligand>
</feature>
<feature type="binding site" evidence="1">
    <location>
        <position position="174"/>
    </location>
    <ligand>
        <name>thiamine diphosphate</name>
        <dbReference type="ChEBI" id="CHEBI:58937"/>
    </ligand>
</feature>
<feature type="binding site" evidence="1">
    <location>
        <position position="287"/>
    </location>
    <ligand>
        <name>thiamine diphosphate</name>
        <dbReference type="ChEBI" id="CHEBI:58937"/>
    </ligand>
</feature>
<feature type="binding site" evidence="1">
    <location>
        <position position="370"/>
    </location>
    <ligand>
        <name>thiamine diphosphate</name>
        <dbReference type="ChEBI" id="CHEBI:58937"/>
    </ligand>
</feature>
<sequence>MHLSEITHPNQLHGLSLRQLEDIARQIREKHLQTIAATGGHLGPGLGVVELTIALYQTLDLDRDKVLWDVGHQAYPHKLLTGRYNDFHTLRQKDGIAGYLKRCESKFDHFGAGHASTSISAGLGMALARDAKGEDFKVVSIIGDGALTGGMALEAINHAGHLPNTNIMVILNDNEMSISPNVGAISRYLNKVRLSEPVQFIADNLEEQFKNLPFFGDSLTPEMERVKEGMKRLAVPKVGAVIEELGFKYFGPIDGHNIPELIATFKQAHKVHGPVFVHVATVKGKGYEWAEKDQVGYHAQNPFNLATGKPIPSSKPKPPAYSKVFGHTLTKLAENDPRIIGITAAMATGTGLDKFQAKLPKQYIDVGIAEQHAVTLAGGLACEGMRPVVTIYSTFLQRAFDQIIHDICIQNLPVFFCMDRAGIVGADGPTHQGMYDIAYLRCIPNMTIMAPKDEAELQRMVVTGINHTSGPIAMRYPRGNGLGVPLMEEGWEALPIGKGEILRSGDDILLLGYGTMVNTSLQVAEILSEHGIEATVVNARFVKPLDTELIFPLAQRLGKVVTLEEGCLMGGFGSAVLEALQDANILVPVKRFGVPDKLVDHATPEESFADLGLTSPQIAQQVLAAFFSQKQTANVG</sequence>
<comment type="function">
    <text evidence="1">Catalyzes the acyloin condensation reaction between C atoms 2 and 3 of pyruvate and glyceraldehyde 3-phosphate to yield 1-deoxy-D-xylulose-5-phosphate (DXP).</text>
</comment>
<comment type="catalytic activity">
    <reaction evidence="1">
        <text>D-glyceraldehyde 3-phosphate + pyruvate + H(+) = 1-deoxy-D-xylulose 5-phosphate + CO2</text>
        <dbReference type="Rhea" id="RHEA:12605"/>
        <dbReference type="ChEBI" id="CHEBI:15361"/>
        <dbReference type="ChEBI" id="CHEBI:15378"/>
        <dbReference type="ChEBI" id="CHEBI:16526"/>
        <dbReference type="ChEBI" id="CHEBI:57792"/>
        <dbReference type="ChEBI" id="CHEBI:59776"/>
        <dbReference type="EC" id="2.2.1.7"/>
    </reaction>
</comment>
<comment type="cofactor">
    <cofactor evidence="1">
        <name>Mg(2+)</name>
        <dbReference type="ChEBI" id="CHEBI:18420"/>
    </cofactor>
    <text evidence="1">Binds 1 Mg(2+) ion per subunit.</text>
</comment>
<comment type="cofactor">
    <cofactor evidence="1">
        <name>thiamine diphosphate</name>
        <dbReference type="ChEBI" id="CHEBI:58937"/>
    </cofactor>
    <text evidence="1">Binds 1 thiamine pyrophosphate per subunit.</text>
</comment>
<comment type="pathway">
    <text evidence="1">Metabolic intermediate biosynthesis; 1-deoxy-D-xylulose 5-phosphate biosynthesis; 1-deoxy-D-xylulose 5-phosphate from D-glyceraldehyde 3-phosphate and pyruvate: step 1/1.</text>
</comment>
<comment type="subunit">
    <text evidence="1">Homodimer.</text>
</comment>
<comment type="similarity">
    <text evidence="1">Belongs to the transketolase family. DXPS subfamily.</text>
</comment>
<reference key="1">
    <citation type="journal article" date="2007" name="DNA Res.">
        <title>Complete genomic structure of the bloom-forming toxic cyanobacterium Microcystis aeruginosa NIES-843.</title>
        <authorList>
            <person name="Kaneko T."/>
            <person name="Nakajima N."/>
            <person name="Okamoto S."/>
            <person name="Suzuki I."/>
            <person name="Tanabe Y."/>
            <person name="Tamaoki M."/>
            <person name="Nakamura Y."/>
            <person name="Kasai F."/>
            <person name="Watanabe A."/>
            <person name="Kawashima K."/>
            <person name="Kishida Y."/>
            <person name="Ono A."/>
            <person name="Shimizu Y."/>
            <person name="Takahashi C."/>
            <person name="Minami C."/>
            <person name="Fujishiro T."/>
            <person name="Kohara M."/>
            <person name="Katoh M."/>
            <person name="Nakazaki N."/>
            <person name="Nakayama S."/>
            <person name="Yamada M."/>
            <person name="Tabata S."/>
            <person name="Watanabe M.M."/>
        </authorList>
    </citation>
    <scope>NUCLEOTIDE SEQUENCE [LARGE SCALE GENOMIC DNA]</scope>
    <source>
        <strain>NIES-843 / IAM M-247</strain>
    </source>
</reference>